<protein>
    <recommendedName>
        <fullName evidence="2">Small ribosomal subunit protein uS12m</fullName>
    </recommendedName>
    <alternativeName>
        <fullName>Ribosomal protein S12, mitochondrial</fullName>
    </alternativeName>
</protein>
<reference key="1">
    <citation type="journal article" date="1996" name="Mol. Gen. Genet.">
        <title>Conservation of the organization of the mitochondrial nad3 and rps12 genes in evolutionarily distant angiosperms.</title>
        <authorList>
            <person name="Perrotta G."/>
            <person name="Regina T.M.R."/>
            <person name="Ceci L.R."/>
            <person name="Quagliariello C.C."/>
        </authorList>
    </citation>
    <scope>NUCLEOTIDE SEQUENCE [GENOMIC DNA / MRNA]</scope>
    <scope>RNA EDITING</scope>
    <source>
        <strain>cv. Gloriasol</strain>
        <tissue>Shoot</tissue>
    </source>
</reference>
<keyword id="KW-0496">Mitochondrion</keyword>
<keyword id="KW-0687">Ribonucleoprotein</keyword>
<keyword id="KW-0689">Ribosomal protein</keyword>
<keyword id="KW-0691">RNA editing</keyword>
<comment type="function">
    <text>Protein S12 is involved in the translation initiation step.</text>
</comment>
<comment type="subcellular location">
    <subcellularLocation>
        <location>Mitochondrion</location>
    </subcellularLocation>
</comment>
<comment type="RNA editing">
    <location>
        <position position="24" evidence="1"/>
    </location>
    <location>
        <position position="34" evidence="1"/>
    </location>
    <location>
        <position position="35" evidence="1"/>
    </location>
    <location>
        <position position="38" evidence="1"/>
    </location>
    <location>
        <position position="49" evidence="1"/>
    </location>
    <location>
        <position position="66" evidence="1"/>
    </location>
    <location>
        <position position="74" evidence="1"/>
    </location>
    <location>
        <position position="90" evidence="1"/>
    </location>
    <location>
        <position position="95" evidence="1"/>
    </location>
</comment>
<comment type="similarity">
    <text evidence="2">Belongs to the universal ribosomal protein uS12 family.</text>
</comment>
<gene>
    <name type="primary">RPS12</name>
</gene>
<accession>Q96033</accession>
<accession>Q96031</accession>
<proteinExistence type="evidence at transcript level"/>
<geneLocation type="mitochondrion"/>
<sequence length="125" mass="14308">MPTLNQLIRHGREEKRRTDRTRALDQCPQKQGVCLRVSTRTPKKPNSALRKIAKVRLSNRHDIFAYIPGEGHNLQEHSIVLIRGGRVKDLPGVKFHCIRGVKDLLGIPDRRKGRSKYGAEKPKSR</sequence>
<organism>
    <name type="scientific">Helianthus annuus</name>
    <name type="common">Common sunflower</name>
    <dbReference type="NCBI Taxonomy" id="4232"/>
    <lineage>
        <taxon>Eukaryota</taxon>
        <taxon>Viridiplantae</taxon>
        <taxon>Streptophyta</taxon>
        <taxon>Embryophyta</taxon>
        <taxon>Tracheophyta</taxon>
        <taxon>Spermatophyta</taxon>
        <taxon>Magnoliopsida</taxon>
        <taxon>eudicotyledons</taxon>
        <taxon>Gunneridae</taxon>
        <taxon>Pentapetalae</taxon>
        <taxon>asterids</taxon>
        <taxon>campanulids</taxon>
        <taxon>Asterales</taxon>
        <taxon>Asteraceae</taxon>
        <taxon>Asteroideae</taxon>
        <taxon>Heliantheae alliance</taxon>
        <taxon>Heliantheae</taxon>
        <taxon>Helianthus</taxon>
    </lineage>
</organism>
<feature type="chain" id="PRO_0000146437" description="Small ribosomal subunit protein uS12m">
    <location>
        <begin position="1"/>
        <end position="125"/>
    </location>
</feature>
<evidence type="ECO:0000269" key="1">
    <source>
    </source>
</evidence>
<evidence type="ECO:0000305" key="2"/>
<name>RT12_HELAN</name>
<dbReference type="EMBL" id="Z49775">
    <property type="protein sequence ID" value="CAA89857.1"/>
    <property type="molecule type" value="mRNA"/>
</dbReference>
<dbReference type="EMBL" id="Z49774">
    <property type="protein sequence ID" value="CAA89855.1"/>
    <property type="status" value="ALT_SEQ"/>
    <property type="molecule type" value="Genomic_DNA"/>
</dbReference>
<dbReference type="PIR" id="S71083">
    <property type="entry name" value="S71083"/>
</dbReference>
<dbReference type="RefSeq" id="YP_008999575.1">
    <property type="nucleotide sequence ID" value="NC_023337.1"/>
</dbReference>
<dbReference type="SMR" id="Q96033"/>
<dbReference type="GeneID" id="18250968"/>
<dbReference type="KEGG" id="han:18250968"/>
<dbReference type="OrthoDB" id="414309at2759"/>
<dbReference type="GO" id="GO:0005739">
    <property type="term" value="C:mitochondrion"/>
    <property type="evidence" value="ECO:0007669"/>
    <property type="project" value="UniProtKB-SubCell"/>
</dbReference>
<dbReference type="GO" id="GO:0015935">
    <property type="term" value="C:small ribosomal subunit"/>
    <property type="evidence" value="ECO:0007669"/>
    <property type="project" value="InterPro"/>
</dbReference>
<dbReference type="GO" id="GO:0003735">
    <property type="term" value="F:structural constituent of ribosome"/>
    <property type="evidence" value="ECO:0007669"/>
    <property type="project" value="InterPro"/>
</dbReference>
<dbReference type="GO" id="GO:0006412">
    <property type="term" value="P:translation"/>
    <property type="evidence" value="ECO:0007669"/>
    <property type="project" value="InterPro"/>
</dbReference>
<dbReference type="CDD" id="cd03368">
    <property type="entry name" value="Ribosomal_S12"/>
    <property type="match status" value="1"/>
</dbReference>
<dbReference type="FunFam" id="2.40.50.140:FF:000099">
    <property type="entry name" value="Ribosomal protein S12, mitochondrial"/>
    <property type="match status" value="1"/>
</dbReference>
<dbReference type="Gene3D" id="2.40.50.140">
    <property type="entry name" value="Nucleic acid-binding proteins"/>
    <property type="match status" value="1"/>
</dbReference>
<dbReference type="HAMAP" id="MF_00403_B">
    <property type="entry name" value="Ribosomal_uS12_B"/>
    <property type="match status" value="1"/>
</dbReference>
<dbReference type="InterPro" id="IPR012340">
    <property type="entry name" value="NA-bd_OB-fold"/>
</dbReference>
<dbReference type="InterPro" id="IPR006032">
    <property type="entry name" value="Ribosomal_uS12"/>
</dbReference>
<dbReference type="InterPro" id="IPR005679">
    <property type="entry name" value="Ribosomal_uS12_bac"/>
</dbReference>
<dbReference type="NCBIfam" id="TIGR00981">
    <property type="entry name" value="rpsL_bact"/>
    <property type="match status" value="1"/>
</dbReference>
<dbReference type="PANTHER" id="PTHR11652">
    <property type="entry name" value="30S RIBOSOMAL PROTEIN S12 FAMILY MEMBER"/>
    <property type="match status" value="1"/>
</dbReference>
<dbReference type="Pfam" id="PF00164">
    <property type="entry name" value="Ribosom_S12_S23"/>
    <property type="match status" value="1"/>
</dbReference>
<dbReference type="PIRSF" id="PIRSF002133">
    <property type="entry name" value="Ribosomal_S12/S23"/>
    <property type="match status" value="1"/>
</dbReference>
<dbReference type="PRINTS" id="PR01034">
    <property type="entry name" value="RIBOSOMALS12"/>
</dbReference>
<dbReference type="SUPFAM" id="SSF50249">
    <property type="entry name" value="Nucleic acid-binding proteins"/>
    <property type="match status" value="1"/>
</dbReference>
<dbReference type="PROSITE" id="PS00055">
    <property type="entry name" value="RIBOSOMAL_S12"/>
    <property type="match status" value="1"/>
</dbReference>